<reference key="1">
    <citation type="journal article" date="1994" name="Appl. Environ. Microbiol.">
        <title>Molecular cloning, sequence analysis, and expression of the yeast alcohol acetyltransferase gene.</title>
        <authorList>
            <person name="Fujii T."/>
            <person name="Nagasawa N."/>
            <person name="Iwamatsu A."/>
            <person name="Bogaki T."/>
            <person name="Tamai Y."/>
            <person name="Hamachi M."/>
        </authorList>
    </citation>
    <scope>NUCLEOTIDE SEQUENCE [GENOMIC DNA]</scope>
    <scope>PARTIAL PROTEIN SEQUENCE</scope>
    <source>
        <strain>Kyokai No.7</strain>
    </source>
</reference>
<reference key="2">
    <citation type="journal article" date="1997" name="Nature">
        <title>The nucleotide sequence of Saccharomyces cerevisiae chromosome XV.</title>
        <authorList>
            <person name="Dujon B."/>
            <person name="Albermann K."/>
            <person name="Aldea M."/>
            <person name="Alexandraki D."/>
            <person name="Ansorge W."/>
            <person name="Arino J."/>
            <person name="Benes V."/>
            <person name="Bohn C."/>
            <person name="Bolotin-Fukuhara M."/>
            <person name="Bordonne R."/>
            <person name="Boyer J."/>
            <person name="Camasses A."/>
            <person name="Casamayor A."/>
            <person name="Casas C."/>
            <person name="Cheret G."/>
            <person name="Cziepluch C."/>
            <person name="Daignan-Fornier B."/>
            <person name="Dang V.-D."/>
            <person name="de Haan M."/>
            <person name="Delius H."/>
            <person name="Durand P."/>
            <person name="Fairhead C."/>
            <person name="Feldmann H."/>
            <person name="Gaillon L."/>
            <person name="Galisson F."/>
            <person name="Gamo F.-J."/>
            <person name="Gancedo C."/>
            <person name="Goffeau A."/>
            <person name="Goulding S.E."/>
            <person name="Grivell L.A."/>
            <person name="Habbig B."/>
            <person name="Hand N.J."/>
            <person name="Hani J."/>
            <person name="Hattenhorst U."/>
            <person name="Hebling U."/>
            <person name="Hernando Y."/>
            <person name="Herrero E."/>
            <person name="Heumann K."/>
            <person name="Hiesel R."/>
            <person name="Hilger F."/>
            <person name="Hofmann B."/>
            <person name="Hollenberg C.P."/>
            <person name="Hughes B."/>
            <person name="Jauniaux J.-C."/>
            <person name="Kalogeropoulos A."/>
            <person name="Katsoulou C."/>
            <person name="Kordes E."/>
            <person name="Lafuente M.J."/>
            <person name="Landt O."/>
            <person name="Louis E.J."/>
            <person name="Maarse A.C."/>
            <person name="Madania A."/>
            <person name="Mannhaupt G."/>
            <person name="Marck C."/>
            <person name="Martin R.P."/>
            <person name="Mewes H.-W."/>
            <person name="Michaux G."/>
            <person name="Paces V."/>
            <person name="Parle-McDermott A.G."/>
            <person name="Pearson B.M."/>
            <person name="Perrin A."/>
            <person name="Pettersson B."/>
            <person name="Poch O."/>
            <person name="Pohl T.M."/>
            <person name="Poirey R."/>
            <person name="Portetelle D."/>
            <person name="Pujol A."/>
            <person name="Purnelle B."/>
            <person name="Ramezani Rad M."/>
            <person name="Rechmann S."/>
            <person name="Schwager C."/>
            <person name="Schweizer M."/>
            <person name="Sor F."/>
            <person name="Sterky F."/>
            <person name="Tarassov I.A."/>
            <person name="Teodoru C."/>
            <person name="Tettelin H."/>
            <person name="Thierry A."/>
            <person name="Tobiasch E."/>
            <person name="Tzermia M."/>
            <person name="Uhlen M."/>
            <person name="Unseld M."/>
            <person name="Valens M."/>
            <person name="Vandenbol M."/>
            <person name="Vetter I."/>
            <person name="Vlcek C."/>
            <person name="Voet M."/>
            <person name="Volckaert G."/>
            <person name="Voss H."/>
            <person name="Wambutt R."/>
            <person name="Wedler H."/>
            <person name="Wiemann S."/>
            <person name="Winsor B."/>
            <person name="Wolfe K.H."/>
            <person name="Zollner A."/>
            <person name="Zumstein E."/>
            <person name="Kleine K."/>
        </authorList>
    </citation>
    <scope>NUCLEOTIDE SEQUENCE [LARGE SCALE GENOMIC DNA]</scope>
    <source>
        <strain>ATCC 204508 / S288c</strain>
    </source>
</reference>
<reference key="3">
    <citation type="journal article" date="2014" name="G3 (Bethesda)">
        <title>The reference genome sequence of Saccharomyces cerevisiae: Then and now.</title>
        <authorList>
            <person name="Engel S.R."/>
            <person name="Dietrich F.S."/>
            <person name="Fisk D.G."/>
            <person name="Binkley G."/>
            <person name="Balakrishnan R."/>
            <person name="Costanzo M.C."/>
            <person name="Dwight S.S."/>
            <person name="Hitz B.C."/>
            <person name="Karra K."/>
            <person name="Nash R.S."/>
            <person name="Weng S."/>
            <person name="Wong E.D."/>
            <person name="Lloyd P."/>
            <person name="Skrzypek M.S."/>
            <person name="Miyasato S.R."/>
            <person name="Simison M."/>
            <person name="Cherry J.M."/>
        </authorList>
    </citation>
    <scope>GENOME REANNOTATION</scope>
    <source>
        <strain>ATCC 204508 / S288c</strain>
    </source>
</reference>
<reference key="4">
    <citation type="journal article" date="1993" name="Biosci. Biotechnol. Biochem.">
        <title>The purification, properties and internal peptide sequences of alcohol acetyltransferase isolated from Saccharomyces cerevisiae Kyokai No. 7.</title>
        <authorList>
            <person name="Minetoki T."/>
            <person name="Bogaki T."/>
            <person name="Iwamatsu A."/>
            <person name="Fujii T."/>
            <person name="Hamachi M."/>
        </authorList>
    </citation>
    <scope>PARTIAL PROTEIN SEQUENCE</scope>
    <scope>FUNCTION</scope>
    <scope>CATALYTIC ACTIVITY</scope>
    <scope>BIOPHYSICOCHEMICAL PROPERTIES</scope>
    <scope>ACTIVITY REGULATION</scope>
</reference>
<reference key="5">
    <citation type="journal article" date="1997" name="Appl. Environ. Microbiol.">
        <title>Effect of aeration and unsaturated fatty acids on expression of the Saccharomyces cerevisiae alcohol acetyltransferase gene.</title>
        <authorList>
            <person name="Fujii T."/>
            <person name="Kobayashi O."/>
            <person name="Yoshimoto H."/>
            <person name="Furukawa S."/>
            <person name="Tamai Y."/>
        </authorList>
    </citation>
    <scope>INDUCTION</scope>
</reference>
<reference key="6">
    <citation type="journal article" date="1998" name="Appl. Environ. Microbiol.">
        <title>Balance of activities of alcohol acetyltransferase and esterase in Saccharomyces cerevisiae is important for production of isoamyl acetate.</title>
        <authorList>
            <person name="Fukuda K."/>
            <person name="Yamamoto N."/>
            <person name="Kiyokawa Y."/>
            <person name="Yanagiuchi T."/>
            <person name="Wakai Y."/>
            <person name="Kitamoto K."/>
            <person name="Inoue Y."/>
            <person name="Kimura A."/>
        </authorList>
    </citation>
    <scope>FUNCTION</scope>
</reference>
<reference key="7">
    <citation type="journal article" date="1998" name="Yeast">
        <title>Transcriptional co-regulation of Saccharomyces cerevisiae alcohol acetyltransferase gene, ATF1 and delta-9 fatty acid desaturase gene, OLE1 by unsaturated fatty acids.</title>
        <authorList>
            <person name="Fujiwara D."/>
            <person name="Yoshimoto H."/>
            <person name="Sone H."/>
            <person name="Harashima S."/>
            <person name="Tamai Y."/>
        </authorList>
    </citation>
    <scope>INDUCTION</scope>
</reference>
<reference key="8">
    <citation type="journal article" date="1999" name="Yeast">
        <title>Molecular mechanism of the multiple regulation of the Saccharomyces cerevisiae ATF1 gene encoding alcohol acetyltransferase.</title>
        <authorList>
            <person name="Fujiwara D."/>
            <person name="Kobayashi O."/>
            <person name="Yoshimoto H."/>
            <person name="Harashima S."/>
            <person name="Tamai Y."/>
        </authorList>
    </citation>
    <scope>INDUCTION</scope>
</reference>
<reference key="9">
    <citation type="journal article" date="2000" name="Appl. Environ. Microbiol.">
        <title>Effect of increased yeast alcohol acetyltransferase activity on flavor profiles of wine and distillates.</title>
        <authorList>
            <person name="Lilly M."/>
            <person name="Lambrechts M.G."/>
            <person name="Pretorius I.S."/>
        </authorList>
    </citation>
    <scope>FUNCTION</scope>
    <scope>BIOTECHNOLOGY</scope>
</reference>
<reference key="10">
    <citation type="journal article" date="2003" name="Appl. Environ. Microbiol.">
        <title>Expression levels of the yeast alcohol acetyltransferase genes ATF1, Lg-ATF1, and ATF2 control the formation of a broad range of volatile esters.</title>
        <authorList>
            <person name="Verstrepen K.J."/>
            <person name="Van Laere S.D."/>
            <person name="Vanderhaegen B.M."/>
            <person name="Derdelinckx G."/>
            <person name="Dufour J.P."/>
            <person name="Pretorius I.S."/>
            <person name="Winderickx J."/>
            <person name="Thevelein J.M."/>
            <person name="Delvaux F.R."/>
        </authorList>
    </citation>
    <scope>FUNCTION</scope>
    <scope>DISRUPTION PHENOTYPE</scope>
</reference>
<reference key="11">
    <citation type="journal article" date="2003" name="FEMS Yeast Res.">
        <title>The Saccharomyces cerevisiae alcohol acetyl transferase gene ATF1 is a target of the cAMP/PKA and FGM nutrient-signalling pathways.</title>
        <authorList>
            <person name="Verstrepen K.J."/>
            <person name="Derdelinckx G."/>
            <person name="Dufour J.P."/>
            <person name="Winderickx J."/>
            <person name="Pretorius I.S."/>
            <person name="Thevelein J.M."/>
            <person name="Delvaux F.R."/>
        </authorList>
    </citation>
    <scope>INDUCTION</scope>
</reference>
<reference key="12">
    <citation type="journal article" date="2003" name="J. Ind. Microbiol. Biotechnol.">
        <title>Heterologous expression of the Saccharomyces cerevisiae alcohol acetyltransferase genes in Clostridium acetobutylicum and Escherichia coli for the production of isoamyl acetate.</title>
        <authorList>
            <person name="Horton C.E."/>
            <person name="Huang K.X."/>
            <person name="Bennett G.N."/>
            <person name="Rudolph F.B."/>
        </authorList>
    </citation>
    <scope>FUNCTION</scope>
</reference>
<reference key="13">
    <citation type="journal article" date="2003" name="Nature">
        <title>Global analysis of protein expression in yeast.</title>
        <authorList>
            <person name="Ghaemmaghami S."/>
            <person name="Huh W.-K."/>
            <person name="Bower K."/>
            <person name="Howson R.W."/>
            <person name="Belle A."/>
            <person name="Dephoure N."/>
            <person name="O'Shea E.K."/>
            <person name="Weissman J.S."/>
        </authorList>
    </citation>
    <scope>LEVEL OF PROTEIN EXPRESSION [LARGE SCALE ANALYSIS]</scope>
</reference>
<reference key="14">
    <citation type="journal article" date="2004" name="Yeast">
        <title>The Saccharomyces cerevisiae alcohol acetyl transferase Atf1p is localized in lipid particles.</title>
        <authorList>
            <person name="Verstrepen K.J."/>
            <person name="Van Laere S.D."/>
            <person name="Vercammen J."/>
            <person name="Derdelinckx G."/>
            <person name="Dufour J.P."/>
            <person name="Pretorius I.S."/>
            <person name="Winderickx J."/>
            <person name="Thevelein J.M."/>
            <person name="Delvaux F.R."/>
        </authorList>
    </citation>
    <scope>SUBCELLULAR LOCATION</scope>
</reference>
<reference key="15">
    <citation type="journal article" date="2006" name="Yeast">
        <title>The effect of increased yeast alcohol acetyltransferase and esterase activity on the flavour profiles of wine and distillates.</title>
        <authorList>
            <person name="Lilly M."/>
            <person name="Bauer F.F."/>
            <person name="Lambrechts M.G."/>
            <person name="Swiegers J.H."/>
            <person name="Cozzolino D."/>
            <person name="Pretorius I.S."/>
        </authorList>
    </citation>
    <scope>FUNCTION</scope>
    <scope>BIOTECHNOLOGY</scope>
</reference>
<reference key="16">
    <citation type="journal article" date="2008" name="Appl. Microbiol. Biotechnol.">
        <title>Production of the aroma chemicals 3-(methylthio)-1-propanol and 3-(methylthio)-propylacetate with yeasts.</title>
        <authorList>
            <person name="Etschmann M.M."/>
            <person name="Koetter P."/>
            <person name="Hauf J."/>
            <person name="Bluemke W."/>
            <person name="Entian K.D."/>
            <person name="Schrader J."/>
        </authorList>
    </citation>
    <scope>FUNCTION</scope>
    <scope>BIOTECHNOLOGY</scope>
</reference>
<reference key="17">
    <citation type="journal article" date="2008" name="Bioprocess Biosyst. Eng.">
        <title>Aerobic production of isoamyl acetate by overexpression of the yeast alcohol acetyl-transferases AFT1 and AFT2 in Escherichia coli and using low-cost fermentation ingredients.</title>
        <authorList>
            <person name="Singh R."/>
            <person name="Vadlani P.V."/>
            <person name="Harrison M.L."/>
            <person name="Bennett G.N."/>
            <person name="San K.Y."/>
        </authorList>
    </citation>
    <scope>FUNCTION</scope>
</reference>
<reference key="18">
    <citation type="journal article" date="2014" name="Cell Rep.">
        <title>The fungal aroma gene ATF1 promotes dispersal of yeast cells through insect vectors.</title>
        <authorList>
            <person name="Christiaens J.F."/>
            <person name="Franco L.M."/>
            <person name="Cools T.L."/>
            <person name="De Meester L."/>
            <person name="Michiels J."/>
            <person name="Wenseleers T."/>
            <person name="Hassan B.A."/>
            <person name="Yaksi E."/>
            <person name="Verstrepen K.J."/>
        </authorList>
    </citation>
    <scope>FUNCTION</scope>
</reference>
<reference key="19">
    <citation type="journal article" date="2014" name="J. Ind. Microbiol. Biotechnol.">
        <title>Enhanced acetate ester production of Chinese liquor yeast by overexpressing ATF1 through precise and seamless insertion of PGK1 promoter.</title>
        <authorList>
            <person name="Dong J."/>
            <person name="Xu H."/>
            <person name="Zhao L."/>
            <person name="Chen Y."/>
            <person name="Zhang C."/>
            <person name="Guo X."/>
            <person name="Hou X."/>
            <person name="Chen D."/>
            <person name="Zhang C."/>
            <person name="Xiao D."/>
        </authorList>
    </citation>
    <scope>FUNCTION</scope>
    <scope>BIOTECHNOLOGY</scope>
</reference>
<reference key="20">
    <citation type="journal article" date="2014" name="Metab. Eng.">
        <title>Engineering modular ester fermentative pathways in Escherichia coli.</title>
        <authorList>
            <person name="Layton D.S."/>
            <person name="Trinh C.T."/>
        </authorList>
    </citation>
    <scope>BIOTECHNOLOGY</scope>
</reference>
<reference key="21">
    <citation type="journal article" date="2014" name="Nat. Chem. Biol.">
        <title>Expanding ester biosynthesis in Escherichia coli.</title>
        <authorList>
            <person name="Rodriguez G.M."/>
            <person name="Tashiro Y."/>
            <person name="Atsumi S."/>
        </authorList>
    </citation>
    <scope>BIOTECHNOLOGY</scope>
</reference>
<reference key="22">
    <citation type="journal article" date="2014" name="PLoS ONE">
        <title>Dual N- and C-terminal helices are required for endoplasmic reticulum and lipid droplet association of alcohol acetyltransferases in Saccharomyces cerevisiae.</title>
        <authorList>
            <person name="Lin J.L."/>
            <person name="Wheeldon I."/>
        </authorList>
    </citation>
    <scope>SUBCELLULAR LOCATION</scope>
    <scope>DOMAIN</scope>
</reference>
<reference key="23">
    <citation type="journal article" date="2015" name="Appl. Microbiol. Biotechnol.">
        <title>Metabolic engineering of Escherichia coli for production of biodiesel from fatty alcohols and acetyl-CoA.</title>
        <authorList>
            <person name="Guo D."/>
            <person name="Pan H."/>
            <person name="Li X."/>
        </authorList>
    </citation>
    <scope>BIOTECHNOLOGY</scope>
</reference>
<reference key="24">
    <citation type="journal article" date="2015" name="Metab. Eng.">
        <title>Engineered biosynthesis of medium-chain esters in Escherichia coli.</title>
        <authorList>
            <person name="Tai Y.S."/>
            <person name="Xiong M."/>
            <person name="Zhang K."/>
        </authorList>
    </citation>
    <scope>BIOTECHNOLOGY</scope>
</reference>
<reference key="25">
    <citation type="journal article" date="2016" name="Lipids">
        <title>The yeast ATF1 acetyltransferase efficiently acetylates insect pheromone alcohols: implications for the biological production of moth pheromones.</title>
        <authorList>
            <person name="Ding B.J."/>
            <person name="Lager I."/>
            <person name="Bansal S."/>
            <person name="Durrett T.P."/>
            <person name="Stymne S."/>
            <person name="Loefstedt C."/>
        </authorList>
    </citation>
    <scope>BIOTECHNOLOGY</scope>
</reference>
<reference key="26">
    <citation type="journal article" date="2017" name="ACS Synth. Biol.">
        <title>Synthetic Protein Scaffolds for Biosynthetic Pathway Colocalization on Lipid Droplet Membranes.</title>
        <authorList>
            <person name="Lin J.L."/>
            <person name="Zhu J."/>
            <person name="Wheeldon I."/>
        </authorList>
    </citation>
    <scope>SUBCELLULAR LOCATION</scope>
</reference>
<reference key="27">
    <citation type="journal article" date="2017" name="J. Ind. Microbiol. Biotechnol.">
        <title>Regulation of Saccharomyces cerevisiae genetic engineering on the production of acetate esters and higher alcohols during Chinese Baijiu fermentation.</title>
        <authorList>
            <person name="Li W."/>
            <person name="Wang J.H."/>
            <person name="Zhang C.Y."/>
            <person name="Ma H.X."/>
            <person name="Xiao D.G."/>
        </authorList>
    </citation>
    <scope>BIOTECHNOLOGY</scope>
</reference>
<reference key="28">
    <citation type="journal article" date="2017" name="Yeast">
        <title>Saccharomyces cerevisiae Atf1p is an alcohol acetyltransferase and a thioesterase in vitro.</title>
        <authorList>
            <person name="Nancolas B."/>
            <person name="Bull I.D."/>
            <person name="Stenner R."/>
            <person name="Dufour V."/>
            <person name="Curnow P."/>
        </authorList>
    </citation>
    <scope>FUNCTION</scope>
    <scope>CATALYTIC ACTIVITY</scope>
    <scope>BIOPHYSICOCHEMICAL PROPERTIES</scope>
    <scope>MUTAGENESIS OF HIS-191</scope>
</reference>
<sequence>MNEIDEKNQAPVQQECLKEMIQNGHARRMGSVEDLYVALNRQNLYRNFCTYGELSDYCTRDQLTLALREICLKNPTLLHIVLPTRWPNHENYYRSSEYYSRPHPVHDYISVLQELKLSGVVLNEQPEYSAVMKQILEEFKNSKGSYTAKIFKLTTTLTIPYFGPTGPSWRLICLPEEHTEKWKKFIFVSNHCMSDGRSSIHFFHDLRDELNNIKTPPKKLDYIFKYEEDYQLLRKLPEPIEKVIDFRPPYLFIPKSLLSGFIYNHLRFSSKGVCMRMDDVEKTDDVVTEIINISPTEFQAIKANIKSNIQGKCTITPFLHVCWFVSLHKWGKFFKPLNFEWLTDIFIPADCRSQLPDDDEMRQMYRYGANVGFIDFTPWISEFDMNDNKENFWPLIEHYHEVISEALRNKKHLHGLGFNIQGFVQKYVNIDKVMCDRAIGKRRGGTLLSNVGLFNQLEEPDAKYSICDLAFGQFQGSWHQAFSLGVCSTNVKGMNIVVASTKNVVGSQESLEELCSIYKALLLGP</sequence>
<gene>
    <name evidence="26" type="primary">ATF1</name>
    <name type="ordered locus">YOR377W</name>
</gene>
<dbReference type="EC" id="2.3.1.84" evidence="19 22"/>
<dbReference type="EC" id="3.1.2.20" evidence="19"/>
<dbReference type="EMBL" id="D26554">
    <property type="protein sequence ID" value="BAA05552.1"/>
    <property type="molecule type" value="Genomic_DNA"/>
</dbReference>
<dbReference type="EMBL" id="Z75285">
    <property type="protein sequence ID" value="CAA99708.1"/>
    <property type="molecule type" value="Genomic_DNA"/>
</dbReference>
<dbReference type="EMBL" id="BK006948">
    <property type="protein sequence ID" value="DAA11136.1"/>
    <property type="molecule type" value="Genomic_DNA"/>
</dbReference>
<dbReference type="PIR" id="S67289">
    <property type="entry name" value="S67289"/>
</dbReference>
<dbReference type="RefSeq" id="NP_015022.3">
    <property type="nucleotide sequence ID" value="NM_001183797.3"/>
</dbReference>
<dbReference type="BioGRID" id="34759">
    <property type="interactions" value="43"/>
</dbReference>
<dbReference type="DIP" id="DIP-5494N"/>
<dbReference type="FunCoup" id="P40353">
    <property type="interactions" value="64"/>
</dbReference>
<dbReference type="IntAct" id="P40353">
    <property type="interactions" value="2"/>
</dbReference>
<dbReference type="STRING" id="4932.YOR377W"/>
<dbReference type="PaxDb" id="4932-YOR377W"/>
<dbReference type="PeptideAtlas" id="P40353"/>
<dbReference type="EnsemblFungi" id="YOR377W_mRNA">
    <property type="protein sequence ID" value="YOR377W"/>
    <property type="gene ID" value="YOR377W"/>
</dbReference>
<dbReference type="GeneID" id="854559"/>
<dbReference type="KEGG" id="sce:YOR377W"/>
<dbReference type="AGR" id="SGD:S000005904"/>
<dbReference type="SGD" id="S000005904">
    <property type="gene designation" value="ATF1"/>
</dbReference>
<dbReference type="VEuPathDB" id="FungiDB:YOR377W"/>
<dbReference type="eggNOG" id="ENOG502QTAU">
    <property type="taxonomic scope" value="Eukaryota"/>
</dbReference>
<dbReference type="GeneTree" id="ENSGT00940000176620"/>
<dbReference type="HOGENOM" id="CLU_043707_0_0_1"/>
<dbReference type="InParanoid" id="P40353"/>
<dbReference type="OMA" id="FAEINDF"/>
<dbReference type="OrthoDB" id="3979966at2759"/>
<dbReference type="BioCyc" id="MetaCyc:YOR377W-MONOMER"/>
<dbReference type="BioCyc" id="YEAST:YOR377W-MONOMER"/>
<dbReference type="BRENDA" id="2.3.1.84">
    <property type="organism ID" value="984"/>
</dbReference>
<dbReference type="SABIO-RK" id="P40353"/>
<dbReference type="BioGRID-ORCS" id="854559">
    <property type="hits" value="0 hits in 10 CRISPR screens"/>
</dbReference>
<dbReference type="PRO" id="PR:P40353"/>
<dbReference type="Proteomes" id="UP000002311">
    <property type="component" value="Chromosome XV"/>
</dbReference>
<dbReference type="RNAct" id="P40353">
    <property type="molecule type" value="protein"/>
</dbReference>
<dbReference type="GO" id="GO:0005783">
    <property type="term" value="C:endoplasmic reticulum"/>
    <property type="evidence" value="ECO:0007005"/>
    <property type="project" value="SGD"/>
</dbReference>
<dbReference type="GO" id="GO:0005789">
    <property type="term" value="C:endoplasmic reticulum membrane"/>
    <property type="evidence" value="ECO:0007669"/>
    <property type="project" value="UniProtKB-SubCell"/>
</dbReference>
<dbReference type="GO" id="GO:0005811">
    <property type="term" value="C:lipid droplet"/>
    <property type="evidence" value="ECO:0000314"/>
    <property type="project" value="SGD"/>
</dbReference>
<dbReference type="GO" id="GO:0004026">
    <property type="term" value="F:alcohol O-acetyltransferase activity"/>
    <property type="evidence" value="ECO:0000314"/>
    <property type="project" value="SGD"/>
</dbReference>
<dbReference type="GO" id="GO:0047617">
    <property type="term" value="F:fatty acyl-CoA hydrolase activity"/>
    <property type="evidence" value="ECO:0007669"/>
    <property type="project" value="UniProtKB-EC"/>
</dbReference>
<dbReference type="GO" id="GO:0008080">
    <property type="term" value="F:N-acetyltransferase activity"/>
    <property type="evidence" value="ECO:0000318"/>
    <property type="project" value="GO_Central"/>
</dbReference>
<dbReference type="GO" id="GO:1901089">
    <property type="term" value="P:acetate ester metabolic process involved in fermentation"/>
    <property type="evidence" value="ECO:0000315"/>
    <property type="project" value="SGD"/>
</dbReference>
<dbReference type="InterPro" id="IPR052058">
    <property type="entry name" value="Alcohol_O-acetyltransferase"/>
</dbReference>
<dbReference type="InterPro" id="IPR010828">
    <property type="entry name" value="Atf2/Sli1-like"/>
</dbReference>
<dbReference type="PANTHER" id="PTHR28037">
    <property type="entry name" value="ALCOHOL O-ACETYLTRANSFERASE 1-RELATED"/>
    <property type="match status" value="1"/>
</dbReference>
<dbReference type="PANTHER" id="PTHR28037:SF1">
    <property type="entry name" value="ALCOHOL O-ACETYLTRANSFERASE 1-RELATED"/>
    <property type="match status" value="1"/>
</dbReference>
<dbReference type="Pfam" id="PF07247">
    <property type="entry name" value="AATase"/>
    <property type="match status" value="1"/>
</dbReference>
<comment type="function">
    <text evidence="2 3 8 9 10 14 15 19 22 25">Major alcohol O-acetyltransferase that uses acetyl-CoA to synthesize acetate esters from various alcohols, producing ethyl acetate, isoamyl acetate, isobutyl acetate, butyl acetate, hexyl acetate, heptyl acetate and octyl acetate (PubMed:10653746, PubMed:12937998, PubMed:16845703, PubMed:17891501, PubMed:18597084, PubMed:25306884, PubMed:28160314, PubMed:7764365, PubMed:9758847). The alcohol acyltransferase activity is promiscuous with regard to alcohol but relatively specific for acetyl-CoA since ATF1 does not use any other acyl-CoAs (C3, C4, C5, C6, C8, C10, C12) (PubMed:28160314). Acts also as an efficient thioesterase in vitro with specificity towards medium-chain-length acyl-CoAs (PubMed:28160314). In natural environments, the production of aromatic volatile metabolites promotes dispersal through insect vectors (PubMed:25310977).</text>
</comment>
<comment type="catalytic activity">
    <reaction evidence="19 22">
        <text>an aliphatic alcohol + acetyl-CoA = an acetyl ester + CoA</text>
        <dbReference type="Rhea" id="RHEA:17229"/>
        <dbReference type="ChEBI" id="CHEBI:2571"/>
        <dbReference type="ChEBI" id="CHEBI:47622"/>
        <dbReference type="ChEBI" id="CHEBI:57287"/>
        <dbReference type="ChEBI" id="CHEBI:57288"/>
        <dbReference type="EC" id="2.3.1.84"/>
    </reaction>
</comment>
<comment type="catalytic activity">
    <reaction evidence="19">
        <text>a fatty acyl-CoA + H2O = a fatty acid + CoA + H(+)</text>
        <dbReference type="Rhea" id="RHEA:16781"/>
        <dbReference type="ChEBI" id="CHEBI:15377"/>
        <dbReference type="ChEBI" id="CHEBI:15378"/>
        <dbReference type="ChEBI" id="CHEBI:28868"/>
        <dbReference type="ChEBI" id="CHEBI:57287"/>
        <dbReference type="ChEBI" id="CHEBI:77636"/>
        <dbReference type="EC" id="3.1.2.20"/>
    </reaction>
</comment>
<comment type="catalytic activity">
    <reaction evidence="22">
        <text>3-methylbutanol + acetyl-CoA = 3-methylbutyl acetate + CoA</text>
        <dbReference type="Rhea" id="RHEA:65236"/>
        <dbReference type="ChEBI" id="CHEBI:15837"/>
        <dbReference type="ChEBI" id="CHEBI:31725"/>
        <dbReference type="ChEBI" id="CHEBI:57287"/>
        <dbReference type="ChEBI" id="CHEBI:57288"/>
    </reaction>
    <physiologicalReaction direction="left-to-right" evidence="22">
        <dbReference type="Rhea" id="RHEA:65237"/>
    </physiologicalReaction>
</comment>
<comment type="activity regulation">
    <text evidence="22">Found to be inhibited by cadmium, copper, zinc and mercurium divalent cations and sulfhydryl reagents (PubMed:7764365). Inhibited by the addition of unsaturated fatty acids to the culture (PubMed:7764365).</text>
</comment>
<comment type="biophysicochemical properties">
    <kinetics>
        <KM evidence="22">0.19 mM for acetyl-CoA (for acetyltransferase activity)</KM>
        <KM evidence="22">29.8 mM for isoamyl alcohol (for acetyltransferase activity)</KM>
        <KM evidence="19">61 uM for acetyl-CoA (for thioesterase activity)</KM>
        <KM evidence="19">25 uM for butyryl-CoA (for thioesterase activity)</KM>
        <KM evidence="19">12 uM for hexanoyl-CoA (for thioesterase activity)</KM>
        <KM evidence="19">3 uM for octanoyl-CoA (for thioesterase activity)</KM>
    </kinetics>
    <phDependence>
        <text evidence="22">Optimum pH is 8.</text>
    </phDependence>
    <temperatureDependence>
        <text evidence="22">Optimum temperature is 25 degrees Celsius.</text>
    </temperatureDependence>
</comment>
<comment type="subcellular location">
    <subcellularLocation>
        <location evidence="7 12 21">Lipid droplet</location>
    </subcellularLocation>
    <subcellularLocation>
        <location evidence="12">Endoplasmic reticulum membrane</location>
        <topology evidence="12">Peripheral membrane protein</topology>
    </subcellularLocation>
    <text evidence="12">Traffics to lipid droplets during the stationary phase (PubMed:25093817).</text>
</comment>
<comment type="induction">
    <text evidence="1 6 23 24">Expression is repressed both by aeration and by unsaturated fatty acids (PubMed:9055409, PubMed:9675816). Also repressed by heat and ethanol stress (PubMed:14654433). Rapid induction by glucose depends on the cAMP/PKA signaling pathway (PubMed:14654433). Long-term expression requires both carbon and nitrogen sources (PubMed:14654433). The activation of transcription is dependent on RAP1, and the ROX1-TUP1p-SSN6 hypoxic repressor complex is responsible for repression by oxygen (PubMed:10487921). The putative ROX1-binding sequence in the ATF1 promoter is 5'-CCTATTGTTTT-3' and the RAP1-binding sequence is 5'-AACCCAACAAA-3' (PubMed:10487921).</text>
</comment>
<comment type="domain">
    <text evidence="12">Segments of the N- and C-terminal domains (residues 24-41 and 508-525, respectively) are predicted to be amphipathic helices and are essential for endoplasmic reticulum and lipid dropplet association (PubMed:25093817).</text>
</comment>
<comment type="disruption phenotype">
    <text evidence="4">Reduces levels of isoamyl acetate production during fermentation to about 16% of those produced by the wild-type strain and causes a 40% reduction of ethyl acetate formation (PubMed:12957907).</text>
</comment>
<comment type="biotechnology">
    <text evidence="2 8 10 11 13 14 16 17 18 20">Understanding the biochemistry of the volatile esters is of considerable importance in industrial agriculture, winemaking and brewing. ATF1 could profoundly affect the flavor profiles of wines and distillates deficient in aroma, thereby paving the way for the production of products maintaining a fruitier character for longer periods after bottling (PubMed:10653746, PubMed:16845703, PubMed:18597084, PubMed:25306884, PubMed:28176138). The most important acetate esters from the perspective of fermented foods and beverages are probably ethyl acetate (fruity, solvent aroma), isobutyl acetate (sweet, fruit), isoamyl acetate (banana) and 2-phenylethyl acetate (rose). In addition, the enzymes responsible for ester synthesis are targets for the metabolic engineering of cellular factories intended to produce insect pheromones for use in pest control, but also for the production of fragrances, industrial solvents, fine chemicals, pharmaceuticals and renewable biofuels (PubMed:24609358, PubMed:25281839, PubMed:26205521, PubMed:26801935).</text>
</comment>
<comment type="miscellaneous">
    <text evidence="5">Present with 1990 molecules/cell in log phase SD medium.</text>
</comment>
<comment type="similarity">
    <text evidence="27">Belongs to the ATF1 alcohol acetyltransferase family.</text>
</comment>
<accession>P40353</accession>
<accession>D6W370</accession>
<accession>Q08901</accession>
<proteinExistence type="evidence at protein level"/>
<feature type="chain" id="PRO_0000064720" description="Alcohol O-acetyltransferase 1">
    <location>
        <begin position="1"/>
        <end position="525"/>
    </location>
</feature>
<feature type="region of interest" description="Membrane association" evidence="12">
    <location>
        <begin position="24"/>
        <end position="41"/>
    </location>
</feature>
<feature type="region of interest" description="Membrane association" evidence="12">
    <location>
        <begin position="508"/>
        <end position="525"/>
    </location>
</feature>
<feature type="active site" description="Charge relay system" evidence="28">
    <location>
        <position position="191"/>
    </location>
</feature>
<feature type="active site" description="Charge relay system" evidence="28">
    <location>
        <position position="195"/>
    </location>
</feature>
<feature type="mutagenesis site" description="Only moderately reduces the thioesterase activity." evidence="19">
    <original>H</original>
    <variation>A</variation>
    <location>
        <position position="191"/>
    </location>
</feature>
<feature type="sequence conflict" description="In Ref. 1; BAA05552." evidence="27" ref="1">
    <original>T</original>
    <variation>I</variation>
    <location>
        <position position="84"/>
    </location>
</feature>
<feature type="sequence conflict" description="In Ref. 1; BAA05552." evidence="27" ref="1">
    <original>N</original>
    <variation>K</variation>
    <location>
        <position position="391"/>
    </location>
</feature>
<keyword id="KW-0012">Acyltransferase</keyword>
<keyword id="KW-0903">Direct protein sequencing</keyword>
<keyword id="KW-0256">Endoplasmic reticulum</keyword>
<keyword id="KW-0378">Hydrolase</keyword>
<keyword id="KW-0551">Lipid droplet</keyword>
<keyword id="KW-0472">Membrane</keyword>
<keyword id="KW-1185">Reference proteome</keyword>
<keyword id="KW-0808">Transferase</keyword>
<protein>
    <recommendedName>
        <fullName evidence="26">Alcohol O-acetyltransferase 1</fullName>
        <shortName evidence="26">AATase 1</shortName>
        <ecNumber evidence="19 22">2.3.1.84</ecNumber>
        <ecNumber evidence="19">3.1.2.20</ecNumber>
    </recommendedName>
</protein>
<name>ATF1_YEAST</name>
<organism>
    <name type="scientific">Saccharomyces cerevisiae (strain ATCC 204508 / S288c)</name>
    <name type="common">Baker's yeast</name>
    <dbReference type="NCBI Taxonomy" id="559292"/>
    <lineage>
        <taxon>Eukaryota</taxon>
        <taxon>Fungi</taxon>
        <taxon>Dikarya</taxon>
        <taxon>Ascomycota</taxon>
        <taxon>Saccharomycotina</taxon>
        <taxon>Saccharomycetes</taxon>
        <taxon>Saccharomycetales</taxon>
        <taxon>Saccharomycetaceae</taxon>
        <taxon>Saccharomyces</taxon>
    </lineage>
</organism>
<evidence type="ECO:0000269" key="1">
    <source>
    </source>
</evidence>
<evidence type="ECO:0000269" key="2">
    <source>
    </source>
</evidence>
<evidence type="ECO:0000269" key="3">
    <source>
    </source>
</evidence>
<evidence type="ECO:0000269" key="4">
    <source>
    </source>
</evidence>
<evidence type="ECO:0000269" key="5">
    <source>
    </source>
</evidence>
<evidence type="ECO:0000269" key="6">
    <source>
    </source>
</evidence>
<evidence type="ECO:0000269" key="7">
    <source>
    </source>
</evidence>
<evidence type="ECO:0000269" key="8">
    <source>
    </source>
</evidence>
<evidence type="ECO:0000269" key="9">
    <source>
    </source>
</evidence>
<evidence type="ECO:0000269" key="10">
    <source>
    </source>
</evidence>
<evidence type="ECO:0000269" key="11">
    <source>
    </source>
</evidence>
<evidence type="ECO:0000269" key="12">
    <source>
    </source>
</evidence>
<evidence type="ECO:0000269" key="13">
    <source>
    </source>
</evidence>
<evidence type="ECO:0000269" key="14">
    <source>
    </source>
</evidence>
<evidence type="ECO:0000269" key="15">
    <source>
    </source>
</evidence>
<evidence type="ECO:0000269" key="16">
    <source>
    </source>
</evidence>
<evidence type="ECO:0000269" key="17">
    <source>
    </source>
</evidence>
<evidence type="ECO:0000269" key="18">
    <source>
    </source>
</evidence>
<evidence type="ECO:0000269" key="19">
    <source>
    </source>
</evidence>
<evidence type="ECO:0000269" key="20">
    <source>
    </source>
</evidence>
<evidence type="ECO:0000269" key="21">
    <source>
    </source>
</evidence>
<evidence type="ECO:0000269" key="22">
    <source>
    </source>
</evidence>
<evidence type="ECO:0000269" key="23">
    <source>
    </source>
</evidence>
<evidence type="ECO:0000269" key="24">
    <source>
    </source>
</evidence>
<evidence type="ECO:0000269" key="25">
    <source>
    </source>
</evidence>
<evidence type="ECO:0000303" key="26">
    <source>
    </source>
</evidence>
<evidence type="ECO:0000305" key="27"/>
<evidence type="ECO:0000305" key="28">
    <source>
    </source>
</evidence>